<organism>
    <name type="scientific">Haloarcula marismortui (strain ATCC 43049 / DSM 3752 / JCM 8966 / VKM B-1809)</name>
    <name type="common">Halobacterium marismortui</name>
    <dbReference type="NCBI Taxonomy" id="272569"/>
    <lineage>
        <taxon>Archaea</taxon>
        <taxon>Methanobacteriati</taxon>
        <taxon>Methanobacteriota</taxon>
        <taxon>Stenosarchaea group</taxon>
        <taxon>Halobacteria</taxon>
        <taxon>Halobacteriales</taxon>
        <taxon>Haloarculaceae</taxon>
        <taxon>Haloarcula</taxon>
    </lineage>
</organism>
<accession>Q5UZX1</accession>
<dbReference type="EC" id="2.7.2.3" evidence="1"/>
<dbReference type="EMBL" id="AY596297">
    <property type="protein sequence ID" value="AAV47182.1"/>
    <property type="molecule type" value="Genomic_DNA"/>
</dbReference>
<dbReference type="RefSeq" id="WP_011224180.1">
    <property type="nucleotide sequence ID" value="NC_006396.1"/>
</dbReference>
<dbReference type="SMR" id="Q5UZX1"/>
<dbReference type="STRING" id="272569.rrnAC2364"/>
<dbReference type="PaxDb" id="272569-rrnAC2364"/>
<dbReference type="EnsemblBacteria" id="AAV47182">
    <property type="protein sequence ID" value="AAV47182"/>
    <property type="gene ID" value="rrnAC2364"/>
</dbReference>
<dbReference type="GeneID" id="40153261"/>
<dbReference type="KEGG" id="hma:rrnAC2364"/>
<dbReference type="PATRIC" id="fig|272569.17.peg.2982"/>
<dbReference type="eggNOG" id="arCOG00496">
    <property type="taxonomic scope" value="Archaea"/>
</dbReference>
<dbReference type="HOGENOM" id="CLU_025427_0_2_2"/>
<dbReference type="UniPathway" id="UPA00109">
    <property type="reaction ID" value="UER00185"/>
</dbReference>
<dbReference type="Proteomes" id="UP000001169">
    <property type="component" value="Chromosome I"/>
</dbReference>
<dbReference type="GO" id="GO:0005829">
    <property type="term" value="C:cytosol"/>
    <property type="evidence" value="ECO:0007669"/>
    <property type="project" value="TreeGrafter"/>
</dbReference>
<dbReference type="GO" id="GO:0043531">
    <property type="term" value="F:ADP binding"/>
    <property type="evidence" value="ECO:0007669"/>
    <property type="project" value="TreeGrafter"/>
</dbReference>
<dbReference type="GO" id="GO:0005524">
    <property type="term" value="F:ATP binding"/>
    <property type="evidence" value="ECO:0007669"/>
    <property type="project" value="UniProtKB-KW"/>
</dbReference>
<dbReference type="GO" id="GO:0004618">
    <property type="term" value="F:phosphoglycerate kinase activity"/>
    <property type="evidence" value="ECO:0007669"/>
    <property type="project" value="UniProtKB-UniRule"/>
</dbReference>
<dbReference type="GO" id="GO:0006094">
    <property type="term" value="P:gluconeogenesis"/>
    <property type="evidence" value="ECO:0007669"/>
    <property type="project" value="TreeGrafter"/>
</dbReference>
<dbReference type="GO" id="GO:0006096">
    <property type="term" value="P:glycolytic process"/>
    <property type="evidence" value="ECO:0007669"/>
    <property type="project" value="UniProtKB-UniRule"/>
</dbReference>
<dbReference type="Gene3D" id="3.40.50.1260">
    <property type="entry name" value="Phosphoglycerate kinase, N-terminal domain"/>
    <property type="match status" value="2"/>
</dbReference>
<dbReference type="HAMAP" id="MF_00145">
    <property type="entry name" value="Phosphoglyc_kinase"/>
    <property type="match status" value="1"/>
</dbReference>
<dbReference type="InterPro" id="IPR001576">
    <property type="entry name" value="Phosphoglycerate_kinase"/>
</dbReference>
<dbReference type="InterPro" id="IPR015911">
    <property type="entry name" value="Phosphoglycerate_kinase_CS"/>
</dbReference>
<dbReference type="InterPro" id="IPR015824">
    <property type="entry name" value="Phosphoglycerate_kinase_N"/>
</dbReference>
<dbReference type="InterPro" id="IPR036043">
    <property type="entry name" value="Phosphoglycerate_kinase_sf"/>
</dbReference>
<dbReference type="PANTHER" id="PTHR11406">
    <property type="entry name" value="PHOSPHOGLYCERATE KINASE"/>
    <property type="match status" value="1"/>
</dbReference>
<dbReference type="PANTHER" id="PTHR11406:SF23">
    <property type="entry name" value="PHOSPHOGLYCERATE KINASE 1, CHLOROPLASTIC-RELATED"/>
    <property type="match status" value="1"/>
</dbReference>
<dbReference type="Pfam" id="PF00162">
    <property type="entry name" value="PGK"/>
    <property type="match status" value="1"/>
</dbReference>
<dbReference type="PIRSF" id="PIRSF000724">
    <property type="entry name" value="Pgk"/>
    <property type="match status" value="1"/>
</dbReference>
<dbReference type="PRINTS" id="PR00477">
    <property type="entry name" value="PHGLYCKINASE"/>
</dbReference>
<dbReference type="SUPFAM" id="SSF53748">
    <property type="entry name" value="Phosphoglycerate kinase"/>
    <property type="match status" value="1"/>
</dbReference>
<dbReference type="PROSITE" id="PS00111">
    <property type="entry name" value="PGLYCERATE_KINASE"/>
    <property type="match status" value="1"/>
</dbReference>
<evidence type="ECO:0000255" key="1">
    <source>
        <dbReference type="HAMAP-Rule" id="MF_00145"/>
    </source>
</evidence>
<name>PGK_HALMA</name>
<protein>
    <recommendedName>
        <fullName evidence="1">Phosphoglycerate kinase</fullName>
        <ecNumber evidence="1">2.7.2.3</ecNumber>
    </recommendedName>
</protein>
<gene>
    <name evidence="1" type="primary">pgk</name>
    <name type="ordered locus">rrnAC2364</name>
</gene>
<keyword id="KW-0067">ATP-binding</keyword>
<keyword id="KW-0963">Cytoplasm</keyword>
<keyword id="KW-0324">Glycolysis</keyword>
<keyword id="KW-0418">Kinase</keyword>
<keyword id="KW-0547">Nucleotide-binding</keyword>
<keyword id="KW-1185">Reference proteome</keyword>
<keyword id="KW-0808">Transferase</keyword>
<sequence length="400" mass="44078">MTFQTLDDLDDGQRVLVRLDLNSPVEDGTVQDNRRFDRHAETVSELVDRGFEVAVLAHQGRPGRDDFVSLAQHAEILADHIDHDVDFVDETYGPQAIHDIADLDGGDVLVLENTRMCDDELPEEDPEVKSQTEFVQTLKDEFDAYINDAYSAAHRSHASLVGFPLVMDAYAGRVMETEYEANTAIAEKEFDGQVTMVVGGTKATDVIDVMTHLDEKVDDFLLGGIAGELFLRAAGYPVGYDIDDANLYDEQWEENSEKIESMLEDHRDQITLAVDLAYEDDGDRAEQAVDDIEEKSVSYLDVGSETVMEYSPVIRDSEAVFVKGALGMFEDERFSVGTAGVLEAIADTDCFSVVGGGDTSRAIEMYGMEEDEFGHVSIAGGAYIRALTGAELVGVEVLQR</sequence>
<reference key="1">
    <citation type="journal article" date="2004" name="Genome Res.">
        <title>Genome sequence of Haloarcula marismortui: a halophilic archaeon from the Dead Sea.</title>
        <authorList>
            <person name="Baliga N.S."/>
            <person name="Bonneau R."/>
            <person name="Facciotti M.T."/>
            <person name="Pan M."/>
            <person name="Glusman G."/>
            <person name="Deutsch E.W."/>
            <person name="Shannon P."/>
            <person name="Chiu Y."/>
            <person name="Weng R.S."/>
            <person name="Gan R.R."/>
            <person name="Hung P."/>
            <person name="Date S.V."/>
            <person name="Marcotte E."/>
            <person name="Hood L."/>
            <person name="Ng W.V."/>
        </authorList>
    </citation>
    <scope>NUCLEOTIDE SEQUENCE [LARGE SCALE GENOMIC DNA]</scope>
    <source>
        <strain>ATCC 43049 / DSM 3752 / JCM 8966 / VKM B-1809</strain>
    </source>
</reference>
<proteinExistence type="inferred from homology"/>
<comment type="catalytic activity">
    <reaction evidence="1">
        <text>(2R)-3-phosphoglycerate + ATP = (2R)-3-phospho-glyceroyl phosphate + ADP</text>
        <dbReference type="Rhea" id="RHEA:14801"/>
        <dbReference type="ChEBI" id="CHEBI:30616"/>
        <dbReference type="ChEBI" id="CHEBI:57604"/>
        <dbReference type="ChEBI" id="CHEBI:58272"/>
        <dbReference type="ChEBI" id="CHEBI:456216"/>
        <dbReference type="EC" id="2.7.2.3"/>
    </reaction>
</comment>
<comment type="pathway">
    <text evidence="1">Carbohydrate degradation; glycolysis; pyruvate from D-glyceraldehyde 3-phosphate: step 2/5.</text>
</comment>
<comment type="subunit">
    <text evidence="1">Monomer.</text>
</comment>
<comment type="subcellular location">
    <subcellularLocation>
        <location evidence="1">Cytoplasm</location>
    </subcellularLocation>
</comment>
<comment type="similarity">
    <text evidence="1">Belongs to the phosphoglycerate kinase family.</text>
</comment>
<feature type="chain" id="PRO_0000146051" description="Phosphoglycerate kinase">
    <location>
        <begin position="1"/>
        <end position="400"/>
    </location>
</feature>
<feature type="binding site" evidence="1">
    <location>
        <begin position="20"/>
        <end position="22"/>
    </location>
    <ligand>
        <name>substrate</name>
    </ligand>
</feature>
<feature type="binding site" evidence="1">
    <location>
        <position position="35"/>
    </location>
    <ligand>
        <name>substrate</name>
    </ligand>
</feature>
<feature type="binding site" evidence="1">
    <location>
        <begin position="58"/>
        <end position="61"/>
    </location>
    <ligand>
        <name>substrate</name>
    </ligand>
</feature>
<feature type="binding site" evidence="1">
    <location>
        <position position="115"/>
    </location>
    <ligand>
        <name>substrate</name>
    </ligand>
</feature>
<feature type="binding site" evidence="1">
    <location>
        <position position="155"/>
    </location>
    <ligand>
        <name>substrate</name>
    </ligand>
</feature>
<feature type="binding site" evidence="1">
    <location>
        <position position="330"/>
    </location>
    <ligand>
        <name>ATP</name>
        <dbReference type="ChEBI" id="CHEBI:30616"/>
    </ligand>
</feature>
<feature type="binding site" evidence="1">
    <location>
        <begin position="356"/>
        <end position="359"/>
    </location>
    <ligand>
        <name>ATP</name>
        <dbReference type="ChEBI" id="CHEBI:30616"/>
    </ligand>
</feature>